<protein>
    <recommendedName>
        <fullName evidence="2">Pimeloyl-[acyl-carrier protein] methyl ester esterase</fullName>
        <ecNumber evidence="2">3.1.1.85</ecNumber>
    </recommendedName>
    <alternativeName>
        <fullName evidence="2">Biotin synthesis protein BioH</fullName>
    </alternativeName>
    <alternativeName>
        <fullName evidence="2">Carboxylesterase BioH</fullName>
    </alternativeName>
</protein>
<accession>Q9KNL4</accession>
<gene>
    <name evidence="2" type="primary">bioH</name>
    <name type="ordered locus">VC_2718</name>
</gene>
<reference key="1">
    <citation type="journal article" date="2000" name="Nature">
        <title>DNA sequence of both chromosomes of the cholera pathogen Vibrio cholerae.</title>
        <authorList>
            <person name="Heidelberg J.F."/>
            <person name="Eisen J.A."/>
            <person name="Nelson W.C."/>
            <person name="Clayton R.A."/>
            <person name="Gwinn M.L."/>
            <person name="Dodson R.J."/>
            <person name="Haft D.H."/>
            <person name="Hickey E.K."/>
            <person name="Peterson J.D."/>
            <person name="Umayam L.A."/>
            <person name="Gill S.R."/>
            <person name="Nelson K.E."/>
            <person name="Read T.D."/>
            <person name="Tettelin H."/>
            <person name="Richardson D.L."/>
            <person name="Ermolaeva M.D."/>
            <person name="Vamathevan J.J."/>
            <person name="Bass S."/>
            <person name="Qin H."/>
            <person name="Dragoi I."/>
            <person name="Sellers P."/>
            <person name="McDonald L.A."/>
            <person name="Utterback T.R."/>
            <person name="Fleischmann R.D."/>
            <person name="Nierman W.C."/>
            <person name="White O."/>
            <person name="Salzberg S.L."/>
            <person name="Smith H.O."/>
            <person name="Colwell R.R."/>
            <person name="Mekalanos J.J."/>
            <person name="Venter J.C."/>
            <person name="Fraser C.M."/>
        </authorList>
    </citation>
    <scope>NUCLEOTIDE SEQUENCE [LARGE SCALE GENOMIC DNA]</scope>
    <source>
        <strain>ATCC 39315 / El Tor Inaba N16961</strain>
    </source>
</reference>
<name>BIOH_VIBCH</name>
<dbReference type="EC" id="3.1.1.85" evidence="2"/>
<dbReference type="EMBL" id="AE003852">
    <property type="protein sequence ID" value="AAF95858.1"/>
    <property type="status" value="ALT_INIT"/>
    <property type="molecule type" value="Genomic_DNA"/>
</dbReference>
<dbReference type="PIR" id="G82042">
    <property type="entry name" value="G82042"/>
</dbReference>
<dbReference type="RefSeq" id="NP_232345.1">
    <property type="nucleotide sequence ID" value="NC_002505.1"/>
</dbReference>
<dbReference type="SMR" id="Q9KNL4"/>
<dbReference type="STRING" id="243277.VC_2718"/>
<dbReference type="ESTHER" id="vibch-VC2718">
    <property type="family name" value="BioH"/>
</dbReference>
<dbReference type="DNASU" id="2615546"/>
<dbReference type="EnsemblBacteria" id="AAF95858">
    <property type="protein sequence ID" value="AAF95858"/>
    <property type="gene ID" value="VC_2718"/>
</dbReference>
<dbReference type="KEGG" id="vch:VC_2718"/>
<dbReference type="PATRIC" id="fig|243277.26.peg.2593"/>
<dbReference type="eggNOG" id="COG0596">
    <property type="taxonomic scope" value="Bacteria"/>
</dbReference>
<dbReference type="HOGENOM" id="CLU_020336_12_2_6"/>
<dbReference type="UniPathway" id="UPA00078"/>
<dbReference type="Proteomes" id="UP000000584">
    <property type="component" value="Chromosome 1"/>
</dbReference>
<dbReference type="GO" id="GO:0005737">
    <property type="term" value="C:cytoplasm"/>
    <property type="evidence" value="ECO:0007669"/>
    <property type="project" value="UniProtKB-SubCell"/>
</dbReference>
<dbReference type="GO" id="GO:0016020">
    <property type="term" value="C:membrane"/>
    <property type="evidence" value="ECO:0000318"/>
    <property type="project" value="GO_Central"/>
</dbReference>
<dbReference type="GO" id="GO:0090499">
    <property type="term" value="F:pimelyl-[acyl-carrier protein] methyl ester esterase activity"/>
    <property type="evidence" value="ECO:0007669"/>
    <property type="project" value="UniProtKB-EC"/>
</dbReference>
<dbReference type="GO" id="GO:0009102">
    <property type="term" value="P:biotin biosynthetic process"/>
    <property type="evidence" value="ECO:0007669"/>
    <property type="project" value="UniProtKB-UniRule"/>
</dbReference>
<dbReference type="Gene3D" id="3.40.50.1820">
    <property type="entry name" value="alpha/beta hydrolase"/>
    <property type="match status" value="1"/>
</dbReference>
<dbReference type="HAMAP" id="MF_01260">
    <property type="entry name" value="Carboxylester"/>
    <property type="match status" value="1"/>
</dbReference>
<dbReference type="InterPro" id="IPR000073">
    <property type="entry name" value="AB_hydrolase_1"/>
</dbReference>
<dbReference type="InterPro" id="IPR029058">
    <property type="entry name" value="AB_hydrolase_fold"/>
</dbReference>
<dbReference type="InterPro" id="IPR050266">
    <property type="entry name" value="AB_hydrolase_sf"/>
</dbReference>
<dbReference type="InterPro" id="IPR010076">
    <property type="entry name" value="BioH"/>
</dbReference>
<dbReference type="NCBIfam" id="TIGR01738">
    <property type="entry name" value="bioH"/>
    <property type="match status" value="1"/>
</dbReference>
<dbReference type="PANTHER" id="PTHR43798:SF31">
    <property type="entry name" value="AB HYDROLASE SUPERFAMILY PROTEIN YCLE"/>
    <property type="match status" value="1"/>
</dbReference>
<dbReference type="PANTHER" id="PTHR43798">
    <property type="entry name" value="MONOACYLGLYCEROL LIPASE"/>
    <property type="match status" value="1"/>
</dbReference>
<dbReference type="Pfam" id="PF00561">
    <property type="entry name" value="Abhydrolase_1"/>
    <property type="match status" value="1"/>
</dbReference>
<dbReference type="SUPFAM" id="SSF53474">
    <property type="entry name" value="alpha/beta-Hydrolases"/>
    <property type="match status" value="1"/>
</dbReference>
<comment type="function">
    <text evidence="2">The physiological role of BioH is to remove the methyl group introduced by BioC when the pimeloyl moiety is complete. It allows to synthesize pimeloyl-ACP via the fatty acid synthetic pathway through the hydrolysis of the ester bonds of pimeloyl-ACP esters.</text>
</comment>
<comment type="catalytic activity">
    <reaction evidence="2">
        <text>6-carboxyhexanoyl-[ACP] methyl ester + H2O = 6-carboxyhexanoyl-[ACP] + methanol + H(+)</text>
        <dbReference type="Rhea" id="RHEA:42700"/>
        <dbReference type="Rhea" id="RHEA-COMP:9955"/>
        <dbReference type="Rhea" id="RHEA-COMP:10186"/>
        <dbReference type="ChEBI" id="CHEBI:15377"/>
        <dbReference type="ChEBI" id="CHEBI:15378"/>
        <dbReference type="ChEBI" id="CHEBI:17790"/>
        <dbReference type="ChEBI" id="CHEBI:78846"/>
        <dbReference type="ChEBI" id="CHEBI:82735"/>
        <dbReference type="EC" id="3.1.1.85"/>
    </reaction>
</comment>
<comment type="pathway">
    <text evidence="2">Cofactor biosynthesis; biotin biosynthesis.</text>
</comment>
<comment type="subunit">
    <text evidence="2">Monomer.</text>
</comment>
<comment type="subcellular location">
    <subcellularLocation>
        <location evidence="2">Cytoplasm</location>
    </subcellularLocation>
</comment>
<comment type="similarity">
    <text evidence="2">Belongs to the AB hydrolase superfamily. Carboxylesterase BioH family.</text>
</comment>
<comment type="sequence caution" evidence="3">
    <conflict type="erroneous initiation">
        <sequence resource="EMBL-CDS" id="AAF95858"/>
    </conflict>
</comment>
<evidence type="ECO:0000255" key="1"/>
<evidence type="ECO:0000255" key="2">
    <source>
        <dbReference type="HAMAP-Rule" id="MF_01260"/>
    </source>
</evidence>
<evidence type="ECO:0000305" key="3"/>
<proteinExistence type="inferred from homology"/>
<sequence>MTMALYWQVSGQGQDLVLVHGWGMNGAVWQQTAQALSDHFRVHVVDLPGYGHSAEQHAASLEEIAQALLEHAPRNAIWVGWSLGGLVATHMALHHSDYVSKLVTVASSPKFAAQGSWRGIQPDVLTAFTDQLVADFQLTIERFMALQAMGSPSARQDVKVLKQAVLSRPMPNPQSLLAGLTMLAEVDLRDELQHISVPMLRLYGRLDGLVPAKVARDLNHLAPYSEAFMFDQSSHAPFMTEAEAFCQQLIEFATR</sequence>
<keyword id="KW-0093">Biotin biosynthesis</keyword>
<keyword id="KW-0963">Cytoplasm</keyword>
<keyword id="KW-0378">Hydrolase</keyword>
<keyword id="KW-1185">Reference proteome</keyword>
<keyword id="KW-0719">Serine esterase</keyword>
<organism>
    <name type="scientific">Vibrio cholerae serotype O1 (strain ATCC 39315 / El Tor Inaba N16961)</name>
    <dbReference type="NCBI Taxonomy" id="243277"/>
    <lineage>
        <taxon>Bacteria</taxon>
        <taxon>Pseudomonadati</taxon>
        <taxon>Pseudomonadota</taxon>
        <taxon>Gammaproteobacteria</taxon>
        <taxon>Vibrionales</taxon>
        <taxon>Vibrionaceae</taxon>
        <taxon>Vibrio</taxon>
    </lineage>
</organism>
<feature type="chain" id="PRO_0000204495" description="Pimeloyl-[acyl-carrier protein] methyl ester esterase">
    <location>
        <begin position="1"/>
        <end position="255"/>
    </location>
</feature>
<feature type="domain" description="AB hydrolase-1" evidence="1">
    <location>
        <begin position="16"/>
        <end position="241"/>
    </location>
</feature>
<feature type="active site" description="Nucleophile" evidence="2">
    <location>
        <position position="82"/>
    </location>
</feature>
<feature type="active site" evidence="2">
    <location>
        <position position="207"/>
    </location>
</feature>
<feature type="active site" evidence="2">
    <location>
        <position position="235"/>
    </location>
</feature>
<feature type="binding site" evidence="2">
    <location>
        <position position="22"/>
    </location>
    <ligand>
        <name>substrate</name>
    </ligand>
</feature>
<feature type="binding site" evidence="2">
    <location>
        <begin position="82"/>
        <end position="83"/>
    </location>
    <ligand>
        <name>substrate</name>
    </ligand>
</feature>
<feature type="binding site" evidence="2">
    <location>
        <begin position="143"/>
        <end position="147"/>
    </location>
    <ligand>
        <name>substrate</name>
    </ligand>
</feature>
<feature type="binding site" evidence="2">
    <location>
        <position position="235"/>
    </location>
    <ligand>
        <name>substrate</name>
    </ligand>
</feature>